<name>MARH8_HUMAN</name>
<dbReference type="EC" id="2.3.2.27" evidence="10 11 13 14 15 16"/>
<dbReference type="EMBL" id="AK313340">
    <property type="protein sequence ID" value="BAG36144.1"/>
    <property type="molecule type" value="mRNA"/>
</dbReference>
<dbReference type="EMBL" id="AL445201">
    <property type="status" value="NOT_ANNOTATED_CDS"/>
    <property type="molecule type" value="Genomic_DNA"/>
</dbReference>
<dbReference type="EMBL" id="AL512595">
    <property type="status" value="NOT_ANNOTATED_CDS"/>
    <property type="molecule type" value="Genomic_DNA"/>
</dbReference>
<dbReference type="EMBL" id="AL731567">
    <property type="status" value="NOT_ANNOTATED_CDS"/>
    <property type="molecule type" value="Genomic_DNA"/>
</dbReference>
<dbReference type="EMBL" id="CH471160">
    <property type="protein sequence ID" value="EAW86647.1"/>
    <property type="molecule type" value="Genomic_DNA"/>
</dbReference>
<dbReference type="EMBL" id="CH471160">
    <property type="protein sequence ID" value="EAW86648.1"/>
    <property type="molecule type" value="Genomic_DNA"/>
</dbReference>
<dbReference type="EMBL" id="BC025394">
    <property type="protein sequence ID" value="AAH25394.1"/>
    <property type="molecule type" value="mRNA"/>
</dbReference>
<dbReference type="EMBL" id="BC066988">
    <property type="protein sequence ID" value="AAH66988.1"/>
    <property type="molecule type" value="mRNA"/>
</dbReference>
<dbReference type="CCDS" id="CCDS60519.1">
    <molecule id="Q5T0T0-2"/>
</dbReference>
<dbReference type="CCDS" id="CCDS7213.1">
    <molecule id="Q5T0T0-1"/>
</dbReference>
<dbReference type="RefSeq" id="NP_001002266.1">
    <molecule id="Q5T0T0-1"/>
    <property type="nucleotide sequence ID" value="NM_001002266.3"/>
</dbReference>
<dbReference type="RefSeq" id="NP_001269795.1">
    <molecule id="Q5T0T0-2"/>
    <property type="nucleotide sequence ID" value="NM_001282866.2"/>
</dbReference>
<dbReference type="RefSeq" id="NP_001388574.1">
    <molecule id="Q5T0T0-2"/>
    <property type="nucleotide sequence ID" value="NM_001401645.1"/>
</dbReference>
<dbReference type="RefSeq" id="NP_001388575.1">
    <molecule id="Q5T0T0-2"/>
    <property type="nucleotide sequence ID" value="NM_001401646.1"/>
</dbReference>
<dbReference type="RefSeq" id="NP_659458.2">
    <molecule id="Q5T0T0-1"/>
    <property type="nucleotide sequence ID" value="NM_145021.6"/>
</dbReference>
<dbReference type="RefSeq" id="XP_005271861.1">
    <property type="nucleotide sequence ID" value="XM_005271804.2"/>
</dbReference>
<dbReference type="RefSeq" id="XP_006717767.1">
    <property type="nucleotide sequence ID" value="XM_006717704.2"/>
</dbReference>
<dbReference type="RefSeq" id="XP_011537794.1">
    <molecule id="Q5T0T0-2"/>
    <property type="nucleotide sequence ID" value="XM_011539492.4"/>
</dbReference>
<dbReference type="RefSeq" id="XP_011537795.1">
    <property type="nucleotide sequence ID" value="XM_011539493.2"/>
</dbReference>
<dbReference type="RefSeq" id="XP_011537796.1">
    <property type="nucleotide sequence ID" value="XM_011539494.2"/>
</dbReference>
<dbReference type="RefSeq" id="XP_011537797.1">
    <molecule id="Q5T0T0-1"/>
    <property type="nucleotide sequence ID" value="XM_011539495.2"/>
</dbReference>
<dbReference type="RefSeq" id="XP_016871383.1">
    <property type="nucleotide sequence ID" value="XM_017015894.1"/>
</dbReference>
<dbReference type="RefSeq" id="XP_047280719.1">
    <molecule id="Q5T0T0-2"/>
    <property type="nucleotide sequence ID" value="XM_047424763.1"/>
</dbReference>
<dbReference type="RefSeq" id="XP_047280720.1">
    <molecule id="Q5T0T0-2"/>
    <property type="nucleotide sequence ID" value="XM_047424764.1"/>
</dbReference>
<dbReference type="RefSeq" id="XP_047280721.1">
    <molecule id="Q5T0T0-2"/>
    <property type="nucleotide sequence ID" value="XM_047424765.1"/>
</dbReference>
<dbReference type="RefSeq" id="XP_047280722.1">
    <molecule id="Q5T0T0-2"/>
    <property type="nucleotide sequence ID" value="XM_047424766.1"/>
</dbReference>
<dbReference type="RefSeq" id="XP_047280723.1">
    <molecule id="Q5T0T0-1"/>
    <property type="nucleotide sequence ID" value="XM_047424767.1"/>
</dbReference>
<dbReference type="RefSeq" id="XP_047280724.1">
    <molecule id="Q5T0T0-1"/>
    <property type="nucleotide sequence ID" value="XM_047424768.1"/>
</dbReference>
<dbReference type="RefSeq" id="XP_047280725.1">
    <molecule id="Q5T0T0-1"/>
    <property type="nucleotide sequence ID" value="XM_047424769.1"/>
</dbReference>
<dbReference type="PDB" id="2D8S">
    <property type="method" value="NMR"/>
    <property type="chains" value="A=70-136"/>
</dbReference>
<dbReference type="PDBsum" id="2D8S"/>
<dbReference type="BMRB" id="Q5T0T0"/>
<dbReference type="SMR" id="Q5T0T0"/>
<dbReference type="BioGRID" id="128666">
    <property type="interactions" value="69"/>
</dbReference>
<dbReference type="FunCoup" id="Q5T0T0">
    <property type="interactions" value="685"/>
</dbReference>
<dbReference type="IntAct" id="Q5T0T0">
    <property type="interactions" value="9"/>
</dbReference>
<dbReference type="iPTMnet" id="Q5T0T0"/>
<dbReference type="PhosphoSitePlus" id="Q5T0T0"/>
<dbReference type="BioMuta" id="MARCH8"/>
<dbReference type="DMDM" id="74744352"/>
<dbReference type="MassIVE" id="Q5T0T0"/>
<dbReference type="PeptideAtlas" id="Q5T0T0"/>
<dbReference type="ProteomicsDB" id="35410"/>
<dbReference type="ProteomicsDB" id="64200">
    <molecule id="Q5T0T0-1"/>
</dbReference>
<dbReference type="Antibodypedia" id="3041">
    <property type="antibodies" value="155 antibodies from 32 providers"/>
</dbReference>
<dbReference type="DNASU" id="220972"/>
<dbReference type="Ensembl" id="ENST00000319836.7">
    <molecule id="Q5T0T0-1"/>
    <property type="protein sequence ID" value="ENSP00000317087.3"/>
    <property type="gene ID" value="ENSG00000165406.16"/>
</dbReference>
<dbReference type="Ensembl" id="ENST00000395769.6">
    <molecule id="Q5T0T0-1"/>
    <property type="protein sequence ID" value="ENSP00000379116.2"/>
    <property type="gene ID" value="ENSG00000165406.16"/>
</dbReference>
<dbReference type="Ensembl" id="ENST00000395771.7">
    <property type="protein sequence ID" value="ENSP00000379118.4"/>
    <property type="gene ID" value="ENSG00000278545.4"/>
</dbReference>
<dbReference type="Ensembl" id="ENST00000453424.7">
    <molecule id="Q5T0T0-2"/>
    <property type="protein sequence ID" value="ENSP00000411848.2"/>
    <property type="gene ID" value="ENSG00000165406.16"/>
</dbReference>
<dbReference type="GeneID" id="220972"/>
<dbReference type="KEGG" id="hsa:220972"/>
<dbReference type="MANE-Select" id="ENST00000453424.7">
    <molecule id="Q5T0T0-2"/>
    <property type="protein sequence ID" value="ENSP00000411848.2"/>
    <property type="RefSeq nucleotide sequence ID" value="NM_001282866.2"/>
    <property type="RefSeq protein sequence ID" value="NP_001269795.1"/>
</dbReference>
<dbReference type="UCSC" id="uc001jcf.5">
    <molecule id="Q5T0T0-1"/>
    <property type="organism name" value="human"/>
</dbReference>
<dbReference type="AGR" id="HGNC:23356"/>
<dbReference type="CTD" id="220972"/>
<dbReference type="DisGeNET" id="220972"/>
<dbReference type="GeneCards" id="MARCHF8"/>
<dbReference type="HGNC" id="HGNC:23356">
    <property type="gene designation" value="MARCHF8"/>
</dbReference>
<dbReference type="HPA" id="ENSG00000165406">
    <property type="expression patterns" value="Low tissue specificity"/>
</dbReference>
<dbReference type="MIM" id="613335">
    <property type="type" value="gene"/>
</dbReference>
<dbReference type="neXtProt" id="NX_Q5T0T0"/>
<dbReference type="OpenTargets" id="ENSG00000165406"/>
<dbReference type="PharmGKB" id="PA37370"/>
<dbReference type="VEuPathDB" id="HostDB:ENSG00000165406"/>
<dbReference type="eggNOG" id="KOG1609">
    <property type="taxonomic scope" value="Eukaryota"/>
</dbReference>
<dbReference type="GeneTree" id="ENSGT00940000158282"/>
<dbReference type="HOGENOM" id="CLU_035042_1_0_1"/>
<dbReference type="InParanoid" id="Q5T0T0"/>
<dbReference type="OMA" id="INRFHQK"/>
<dbReference type="OrthoDB" id="264354at2759"/>
<dbReference type="PAN-GO" id="Q5T0T0">
    <property type="GO annotations" value="9 GO annotations based on evolutionary models"/>
</dbReference>
<dbReference type="PhylomeDB" id="Q5T0T0"/>
<dbReference type="TreeFam" id="TF319557"/>
<dbReference type="PathwayCommons" id="Q5T0T0"/>
<dbReference type="SignaLink" id="Q5T0T0"/>
<dbReference type="SIGNOR" id="Q5T0T0"/>
<dbReference type="UniPathway" id="UPA00143"/>
<dbReference type="BioGRID-ORCS" id="220972">
    <property type="hits" value="5 hits in 1119 CRISPR screens"/>
</dbReference>
<dbReference type="ChiTaRS" id="MARCH8">
    <property type="organism name" value="human"/>
</dbReference>
<dbReference type="EvolutionaryTrace" id="Q5T0T0"/>
<dbReference type="GenomeRNAi" id="220972"/>
<dbReference type="Pharos" id="Q5T0T0">
    <property type="development level" value="Tbio"/>
</dbReference>
<dbReference type="PRO" id="PR:Q5T0T0"/>
<dbReference type="Proteomes" id="UP000005640">
    <property type="component" value="Chromosome 10"/>
</dbReference>
<dbReference type="RNAct" id="Q5T0T0">
    <property type="molecule type" value="protein"/>
</dbReference>
<dbReference type="Bgee" id="ENSG00000165406">
    <property type="expression patterns" value="Expressed in bone marrow cell and 109 other cell types or tissues"/>
</dbReference>
<dbReference type="ExpressionAtlas" id="Q5T0T0">
    <property type="expression patterns" value="baseline and differential"/>
</dbReference>
<dbReference type="GO" id="GO:0005737">
    <property type="term" value="C:cytoplasm"/>
    <property type="evidence" value="ECO:0000318"/>
    <property type="project" value="GO_Central"/>
</dbReference>
<dbReference type="GO" id="GO:0031901">
    <property type="term" value="C:early endosome membrane"/>
    <property type="evidence" value="ECO:0000318"/>
    <property type="project" value="GO_Central"/>
</dbReference>
<dbReference type="GO" id="GO:0005789">
    <property type="term" value="C:endoplasmic reticulum membrane"/>
    <property type="evidence" value="ECO:0007669"/>
    <property type="project" value="UniProtKB-SubCell"/>
</dbReference>
<dbReference type="GO" id="GO:0005768">
    <property type="term" value="C:endosome"/>
    <property type="evidence" value="ECO:0000314"/>
    <property type="project" value="UniProtKB"/>
</dbReference>
<dbReference type="GO" id="GO:0000139">
    <property type="term" value="C:Golgi membrane"/>
    <property type="evidence" value="ECO:0007669"/>
    <property type="project" value="UniProtKB-SubCell"/>
</dbReference>
<dbReference type="GO" id="GO:0031902">
    <property type="term" value="C:late endosome membrane"/>
    <property type="evidence" value="ECO:0000318"/>
    <property type="project" value="GO_Central"/>
</dbReference>
<dbReference type="GO" id="GO:0005765">
    <property type="term" value="C:lysosomal membrane"/>
    <property type="evidence" value="ECO:0007669"/>
    <property type="project" value="UniProtKB-SubCell"/>
</dbReference>
<dbReference type="GO" id="GO:0005764">
    <property type="term" value="C:lysosome"/>
    <property type="evidence" value="ECO:0000314"/>
    <property type="project" value="UniProtKB"/>
</dbReference>
<dbReference type="GO" id="GO:0042287">
    <property type="term" value="F:MHC protein binding"/>
    <property type="evidence" value="ECO:0000318"/>
    <property type="project" value="GO_Central"/>
</dbReference>
<dbReference type="GO" id="GO:0061630">
    <property type="term" value="F:ubiquitin protein ligase activity"/>
    <property type="evidence" value="ECO:0000318"/>
    <property type="project" value="GO_Central"/>
</dbReference>
<dbReference type="GO" id="GO:0004842">
    <property type="term" value="F:ubiquitin-protein transferase activity"/>
    <property type="evidence" value="ECO:0000314"/>
    <property type="project" value="UniProtKB"/>
</dbReference>
<dbReference type="GO" id="GO:0008270">
    <property type="term" value="F:zinc ion binding"/>
    <property type="evidence" value="ECO:0007669"/>
    <property type="project" value="UniProtKB-KW"/>
</dbReference>
<dbReference type="GO" id="GO:0002250">
    <property type="term" value="P:adaptive immune response"/>
    <property type="evidence" value="ECO:0007669"/>
    <property type="project" value="UniProtKB-KW"/>
</dbReference>
<dbReference type="GO" id="GO:0002495">
    <property type="term" value="P:antigen processing and presentation of peptide antigen via MHC class II"/>
    <property type="evidence" value="ECO:0000318"/>
    <property type="project" value="GO_Central"/>
</dbReference>
<dbReference type="GO" id="GO:0006955">
    <property type="term" value="P:immune response"/>
    <property type="evidence" value="ECO:0000318"/>
    <property type="project" value="GO_Central"/>
</dbReference>
<dbReference type="GO" id="GO:0000209">
    <property type="term" value="P:protein polyubiquitination"/>
    <property type="evidence" value="ECO:0000314"/>
    <property type="project" value="UniProtKB"/>
</dbReference>
<dbReference type="CDD" id="cd16807">
    <property type="entry name" value="RING_CH-C4HC3_MARCH8"/>
    <property type="match status" value="1"/>
</dbReference>
<dbReference type="FunFam" id="3.30.40.10:FF:000043">
    <property type="entry name" value="Putative e3 ubiquitin-protein ligase march8"/>
    <property type="match status" value="1"/>
</dbReference>
<dbReference type="Gene3D" id="3.30.40.10">
    <property type="entry name" value="Zinc/RING finger domain, C3HC4 (zinc finger)"/>
    <property type="match status" value="1"/>
</dbReference>
<dbReference type="InterPro" id="IPR001841">
    <property type="entry name" value="Znf_RING"/>
</dbReference>
<dbReference type="InterPro" id="IPR011016">
    <property type="entry name" value="Znf_RING-CH"/>
</dbReference>
<dbReference type="InterPro" id="IPR013083">
    <property type="entry name" value="Znf_RING/FYVE/PHD"/>
</dbReference>
<dbReference type="PANTHER" id="PTHR45981">
    <property type="entry name" value="LD02310P"/>
    <property type="match status" value="1"/>
</dbReference>
<dbReference type="Pfam" id="PF12906">
    <property type="entry name" value="RINGv"/>
    <property type="match status" value="1"/>
</dbReference>
<dbReference type="SMART" id="SM00744">
    <property type="entry name" value="RINGv"/>
    <property type="match status" value="1"/>
</dbReference>
<dbReference type="SUPFAM" id="SSF57850">
    <property type="entry name" value="RING/U-box"/>
    <property type="match status" value="1"/>
</dbReference>
<dbReference type="PROSITE" id="PS51292">
    <property type="entry name" value="ZF_RING_CH"/>
    <property type="match status" value="1"/>
</dbReference>
<keyword id="KW-0002">3D-structure</keyword>
<keyword id="KW-1064">Adaptive immunity</keyword>
<keyword id="KW-0025">Alternative splicing</keyword>
<keyword id="KW-0968">Cytoplasmic vesicle</keyword>
<keyword id="KW-0256">Endoplasmic reticulum</keyword>
<keyword id="KW-0967">Endosome</keyword>
<keyword id="KW-0333">Golgi apparatus</keyword>
<keyword id="KW-0391">Immunity</keyword>
<keyword id="KW-0458">Lysosome</keyword>
<keyword id="KW-0472">Membrane</keyword>
<keyword id="KW-0479">Metal-binding</keyword>
<keyword id="KW-0597">Phosphoprotein</keyword>
<keyword id="KW-1267">Proteomics identification</keyword>
<keyword id="KW-1185">Reference proteome</keyword>
<keyword id="KW-0808">Transferase</keyword>
<keyword id="KW-0812">Transmembrane</keyword>
<keyword id="KW-1133">Transmembrane helix</keyword>
<keyword id="KW-0833">Ubl conjugation pathway</keyword>
<keyword id="KW-0862">Zinc</keyword>
<keyword id="KW-0863">Zinc-finger</keyword>
<organism>
    <name type="scientific">Homo sapiens</name>
    <name type="common">Human</name>
    <dbReference type="NCBI Taxonomy" id="9606"/>
    <lineage>
        <taxon>Eukaryota</taxon>
        <taxon>Metazoa</taxon>
        <taxon>Chordata</taxon>
        <taxon>Craniata</taxon>
        <taxon>Vertebrata</taxon>
        <taxon>Euteleostomi</taxon>
        <taxon>Mammalia</taxon>
        <taxon>Eutheria</taxon>
        <taxon>Euarchontoglires</taxon>
        <taxon>Primates</taxon>
        <taxon>Haplorrhini</taxon>
        <taxon>Catarrhini</taxon>
        <taxon>Hominidae</taxon>
        <taxon>Homo</taxon>
    </lineage>
</organism>
<proteinExistence type="evidence at protein level"/>
<accession>Q5T0T0</accession>
<accession>B2R8E7</accession>
<accession>H0Y7C6</accession>
<accession>Q5T0S8</accession>
<accession>Q8TC72</accession>
<comment type="function">
    <text evidence="4 5 7 8 9 10 12 13 14 15 16 17">E3 ubiquitin-protein ligase that plays several important roles in innate immunity and adaptive immunity (PubMed:34285233, PubMed:35019698, PubMed:35503863). Mediates ubiquitination of CD86 and MHC class II proteins, such as HLA-DR alpha and beta, and promotes their subsequent endocytosis and sorting to lysosomes via multivesicular bodies (PubMed:19117940, PubMed:19566897). Possesses a very broad antiviral activity by specifically inactivating different viral fusion proteins (PubMed:32934085). Targets and ubiquitinates cytoplasmic lysine residues of viral envelope glycoproteins with single transmembrane domains leading to their lysosomal degradation (PubMed:35019698). Therefore, shows broad-spectrum inhibition against many viruses including retroviruses, rhabdoviruses, arenaviruses, sarbecoviruses or influenzaviruses (PubMed:34285233, PubMed:35019698). Strongly blocks human immunodeficiency virus type 1 envelope glycoprotein incorporation into virions by down-regulating its cell surface expression. Also blocks ebola virus glycoprotein/GP incorporation via surface down-regulation (PubMed:32934085). Mediates 'Lys-63'-linked polyubiquitination of influenza M2 to target it to lysosome for degradation (PubMed:34285233). Mediates the regulation of constitutive ubiquitination and trafficking of the viral restriction factor BST2 within the endocytic pathway (PubMed:28320822). Plays a role in maintenance of immune tolerance to self by promoting the turnover and proteasomal degradation of PD-L1/CD274 via ubiquitination (PubMed:34183449). Catalyzes the 'Lys-63'-linked polyubiquitylation of cGAS thereby inhibiting its DNA binding ability and impairing its antiviral innate immunity (PubMed:35503863). Negatively regulates IL7-mediated T-cell homeostasis by mediating 'Lys-27'-linked polyubiquitination of IL7R, leading to its lysosomal degradation (PubMed:39311660).</text>
</comment>
<comment type="function">
    <text evidence="11">(Microbial infection) Mediates 'Lys-63'-linked polyubiquitination of hepatitis C virus/HCV protein NS2 which allows its binding to HGS, an ESCRT-0 complex component, and this interaction is essential for HCV envelopment.</text>
</comment>
<comment type="catalytic activity">
    <reaction evidence="10 11 13 14 15 16">
        <text>S-ubiquitinyl-[E2 ubiquitin-conjugating enzyme]-L-cysteine + [acceptor protein]-L-lysine = [E2 ubiquitin-conjugating enzyme]-L-cysteine + N(6)-ubiquitinyl-[acceptor protein]-L-lysine.</text>
        <dbReference type="EC" id="2.3.2.27"/>
    </reaction>
</comment>
<comment type="pathway">
    <text>Protein modification; protein ubiquitination.</text>
</comment>
<comment type="subunit">
    <text evidence="4">Interacts with CD86.</text>
</comment>
<comment type="interaction">
    <interactant intactId="EBI-14061946">
        <id>Q5T0T0</id>
    </interactant>
    <interactant intactId="EBI-11977533">
        <id>P36575-2</id>
        <label>ARR3</label>
    </interactant>
    <organismsDiffer>false</organismsDiffer>
    <experiments>3</experiments>
</comment>
<comment type="interaction">
    <interactant intactId="EBI-14061946">
        <id>Q5T0T0</id>
    </interactant>
    <interactant intactId="EBI-1058710">
        <id>O43169</id>
        <label>CYB5B</label>
    </interactant>
    <organismsDiffer>false</organismsDiffer>
    <experiments>3</experiments>
</comment>
<comment type="interaction">
    <interactant intactId="EBI-14061946">
        <id>Q5T0T0</id>
    </interactant>
    <interactant intactId="EBI-11337888">
        <id>Q7L5A8</id>
        <label>FA2H</label>
    </interactant>
    <organismsDiffer>false</organismsDiffer>
    <experiments>3</experiments>
</comment>
<comment type="interaction">
    <interactant intactId="EBI-14061946">
        <id>Q5T0T0</id>
    </interactant>
    <interactant intactId="EBI-4401517">
        <id>O14653</id>
        <label>GOSR2</label>
    </interactant>
    <organismsDiffer>false</organismsDiffer>
    <experiments>3</experiments>
</comment>
<comment type="interaction">
    <interactant intactId="EBI-14061946">
        <id>Q5T0T0</id>
    </interactant>
    <interactant intactId="EBI-2339195">
        <id>Q9P0S9</id>
        <label>TMEM14C</label>
    </interactant>
    <organismsDiffer>false</organismsDiffer>
    <experiments>3</experiments>
</comment>
<comment type="interaction">
    <interactant intactId="EBI-14061946">
        <id>Q5T0T0</id>
    </interactant>
    <interactant intactId="EBI-520113">
        <id>P63027</id>
        <label>VAMP2</label>
    </interactant>
    <organismsDiffer>false</organismsDiffer>
    <experiments>3</experiments>
</comment>
<comment type="subcellular location">
    <subcellularLocation>
        <location evidence="12">Golgi apparatus membrane</location>
    </subcellularLocation>
    <subcellularLocation>
        <location evidence="11 16">Endoplasmic reticulum membrane</location>
    </subcellularLocation>
    <subcellularLocation>
        <location evidence="8">Cytoplasmic vesicle membrane</location>
        <topology evidence="1">Multi-pass membrane protein</topology>
    </subcellularLocation>
    <subcellularLocation>
        <location evidence="5">Lysosome membrane</location>
        <topology evidence="1">Multi-pass membrane protein</topology>
    </subcellularLocation>
    <subcellularLocation>
        <location evidence="5 16">Early endosome membrane</location>
        <topology evidence="1">Multi-pass membrane protein</topology>
    </subcellularLocation>
</comment>
<comment type="alternative products">
    <event type="alternative splicing"/>
    <isoform>
        <id>Q5T0T0-1</id>
        <name>1</name>
        <sequence type="displayed"/>
    </isoform>
    <isoform>
        <id>Q5T0T0-2</id>
        <name>2</name>
        <sequence type="described" ref="VSP_055697"/>
    </isoform>
</comment>
<comment type="tissue specificity">
    <text evidence="4 5">Broadly expressed. Present in immature dendritic cells (at protein level).</text>
</comment>
<comment type="domain">
    <text>The RING-CH-type zinc finger domain is required for E3 ligase activity.</text>
</comment>
<evidence type="ECO:0000255" key="1"/>
<evidence type="ECO:0000255" key="2">
    <source>
        <dbReference type="PROSITE-ProRule" id="PRU00623"/>
    </source>
</evidence>
<evidence type="ECO:0000256" key="3">
    <source>
        <dbReference type="SAM" id="MobiDB-lite"/>
    </source>
</evidence>
<evidence type="ECO:0000269" key="4">
    <source>
    </source>
</evidence>
<evidence type="ECO:0000269" key="5">
    <source>
    </source>
</evidence>
<evidence type="ECO:0000269" key="6">
    <source>
    </source>
</evidence>
<evidence type="ECO:0000269" key="7">
    <source>
    </source>
</evidence>
<evidence type="ECO:0000269" key="8">
    <source>
    </source>
</evidence>
<evidence type="ECO:0000269" key="9">
    <source>
    </source>
</evidence>
<evidence type="ECO:0000269" key="10">
    <source>
    </source>
</evidence>
<evidence type="ECO:0000269" key="11">
    <source>
    </source>
</evidence>
<evidence type="ECO:0000269" key="12">
    <source>
    </source>
</evidence>
<evidence type="ECO:0000269" key="13">
    <source>
    </source>
</evidence>
<evidence type="ECO:0000269" key="14">
    <source>
    </source>
</evidence>
<evidence type="ECO:0000269" key="15">
    <source>
    </source>
</evidence>
<evidence type="ECO:0000269" key="16">
    <source>
    </source>
</evidence>
<evidence type="ECO:0000269" key="17">
    <source>
    </source>
</evidence>
<evidence type="ECO:0000305" key="18"/>
<evidence type="ECO:0000312" key="19">
    <source>
        <dbReference type="HGNC" id="HGNC:23356"/>
    </source>
</evidence>
<evidence type="ECO:0007744" key="20">
    <source>
    </source>
</evidence>
<evidence type="ECO:0007829" key="21">
    <source>
        <dbReference type="PDB" id="2D8S"/>
    </source>
</evidence>
<reference key="1">
    <citation type="journal article" date="2003" name="J. Biol. Chem.">
        <title>c-MIR, a human E3 ubiquitin ligase, is a functional homolog of herpesvirus proteins MIR1 and MIR2 and has similar activity.</title>
        <authorList>
            <person name="Goto E."/>
            <person name="Ishido S."/>
            <person name="Sato Y."/>
            <person name="Ohgimoto S."/>
            <person name="Ohgimoto K."/>
            <person name="Nagano-Fujii M."/>
            <person name="Hotta H."/>
        </authorList>
    </citation>
    <scope>NUCLEOTIDE SEQUENCE [MRNA]</scope>
    <scope>FUNCTION</scope>
    <scope>INTERACTION WITH CD86</scope>
    <scope>TISSUE SPECIFICITY</scope>
    <scope>SUBCELLULAR LOCATION</scope>
</reference>
<reference key="2">
    <citation type="journal article" date="2004" name="Nat. Genet.">
        <title>Complete sequencing and characterization of 21,243 full-length human cDNAs.</title>
        <authorList>
            <person name="Ota T."/>
            <person name="Suzuki Y."/>
            <person name="Nishikawa T."/>
            <person name="Otsuki T."/>
            <person name="Sugiyama T."/>
            <person name="Irie R."/>
            <person name="Wakamatsu A."/>
            <person name="Hayashi K."/>
            <person name="Sato H."/>
            <person name="Nagai K."/>
            <person name="Kimura K."/>
            <person name="Makita H."/>
            <person name="Sekine M."/>
            <person name="Obayashi M."/>
            <person name="Nishi T."/>
            <person name="Shibahara T."/>
            <person name="Tanaka T."/>
            <person name="Ishii S."/>
            <person name="Yamamoto J."/>
            <person name="Saito K."/>
            <person name="Kawai Y."/>
            <person name="Isono Y."/>
            <person name="Nakamura Y."/>
            <person name="Nagahari K."/>
            <person name="Murakami K."/>
            <person name="Yasuda T."/>
            <person name="Iwayanagi T."/>
            <person name="Wagatsuma M."/>
            <person name="Shiratori A."/>
            <person name="Sudo H."/>
            <person name="Hosoiri T."/>
            <person name="Kaku Y."/>
            <person name="Kodaira H."/>
            <person name="Kondo H."/>
            <person name="Sugawara M."/>
            <person name="Takahashi M."/>
            <person name="Kanda K."/>
            <person name="Yokoi T."/>
            <person name="Furuya T."/>
            <person name="Kikkawa E."/>
            <person name="Omura Y."/>
            <person name="Abe K."/>
            <person name="Kamihara K."/>
            <person name="Katsuta N."/>
            <person name="Sato K."/>
            <person name="Tanikawa M."/>
            <person name="Yamazaki M."/>
            <person name="Ninomiya K."/>
            <person name="Ishibashi T."/>
            <person name="Yamashita H."/>
            <person name="Murakawa K."/>
            <person name="Fujimori K."/>
            <person name="Tanai H."/>
            <person name="Kimata M."/>
            <person name="Watanabe M."/>
            <person name="Hiraoka S."/>
            <person name="Chiba Y."/>
            <person name="Ishida S."/>
            <person name="Ono Y."/>
            <person name="Takiguchi S."/>
            <person name="Watanabe S."/>
            <person name="Yosida M."/>
            <person name="Hotuta T."/>
            <person name="Kusano J."/>
            <person name="Kanehori K."/>
            <person name="Takahashi-Fujii A."/>
            <person name="Hara H."/>
            <person name="Tanase T.-O."/>
            <person name="Nomura Y."/>
            <person name="Togiya S."/>
            <person name="Komai F."/>
            <person name="Hara R."/>
            <person name="Takeuchi K."/>
            <person name="Arita M."/>
            <person name="Imose N."/>
            <person name="Musashino K."/>
            <person name="Yuuki H."/>
            <person name="Oshima A."/>
            <person name="Sasaki N."/>
            <person name="Aotsuka S."/>
            <person name="Yoshikawa Y."/>
            <person name="Matsunawa H."/>
            <person name="Ichihara T."/>
            <person name="Shiohata N."/>
            <person name="Sano S."/>
            <person name="Moriya S."/>
            <person name="Momiyama H."/>
            <person name="Satoh N."/>
            <person name="Takami S."/>
            <person name="Terashima Y."/>
            <person name="Suzuki O."/>
            <person name="Nakagawa S."/>
            <person name="Senoh A."/>
            <person name="Mizoguchi H."/>
            <person name="Goto Y."/>
            <person name="Shimizu F."/>
            <person name="Wakebe H."/>
            <person name="Hishigaki H."/>
            <person name="Watanabe T."/>
            <person name="Sugiyama A."/>
            <person name="Takemoto M."/>
            <person name="Kawakami B."/>
            <person name="Yamazaki M."/>
            <person name="Watanabe K."/>
            <person name="Kumagai A."/>
            <person name="Itakura S."/>
            <person name="Fukuzumi Y."/>
            <person name="Fujimori Y."/>
            <person name="Komiyama M."/>
            <person name="Tashiro H."/>
            <person name="Tanigami A."/>
            <person name="Fujiwara T."/>
            <person name="Ono T."/>
            <person name="Yamada K."/>
            <person name="Fujii Y."/>
            <person name="Ozaki K."/>
            <person name="Hirao M."/>
            <person name="Ohmori Y."/>
            <person name="Kawabata A."/>
            <person name="Hikiji T."/>
            <person name="Kobatake N."/>
            <person name="Inagaki H."/>
            <person name="Ikema Y."/>
            <person name="Okamoto S."/>
            <person name="Okitani R."/>
            <person name="Kawakami T."/>
            <person name="Noguchi S."/>
            <person name="Itoh T."/>
            <person name="Shigeta K."/>
            <person name="Senba T."/>
            <person name="Matsumura K."/>
            <person name="Nakajima Y."/>
            <person name="Mizuno T."/>
            <person name="Morinaga M."/>
            <person name="Sasaki M."/>
            <person name="Togashi T."/>
            <person name="Oyama M."/>
            <person name="Hata H."/>
            <person name="Watanabe M."/>
            <person name="Komatsu T."/>
            <person name="Mizushima-Sugano J."/>
            <person name="Satoh T."/>
            <person name="Shirai Y."/>
            <person name="Takahashi Y."/>
            <person name="Nakagawa K."/>
            <person name="Okumura K."/>
            <person name="Nagase T."/>
            <person name="Nomura N."/>
            <person name="Kikuchi H."/>
            <person name="Masuho Y."/>
            <person name="Yamashita R."/>
            <person name="Nakai K."/>
            <person name="Yada T."/>
            <person name="Nakamura Y."/>
            <person name="Ohara O."/>
            <person name="Isogai T."/>
            <person name="Sugano S."/>
        </authorList>
    </citation>
    <scope>NUCLEOTIDE SEQUENCE [LARGE SCALE MRNA]</scope>
    <source>
        <tissue>Testis</tissue>
    </source>
</reference>
<reference key="3">
    <citation type="journal article" date="2004" name="Nature">
        <title>The DNA sequence and comparative analysis of human chromosome 10.</title>
        <authorList>
            <person name="Deloukas P."/>
            <person name="Earthrowl M.E."/>
            <person name="Grafham D.V."/>
            <person name="Rubenfield M."/>
            <person name="French L."/>
            <person name="Steward C.A."/>
            <person name="Sims S.K."/>
            <person name="Jones M.C."/>
            <person name="Searle S."/>
            <person name="Scott C."/>
            <person name="Howe K."/>
            <person name="Hunt S.E."/>
            <person name="Andrews T.D."/>
            <person name="Gilbert J.G.R."/>
            <person name="Swarbreck D."/>
            <person name="Ashurst J.L."/>
            <person name="Taylor A."/>
            <person name="Battles J."/>
            <person name="Bird C.P."/>
            <person name="Ainscough R."/>
            <person name="Almeida J.P."/>
            <person name="Ashwell R.I.S."/>
            <person name="Ambrose K.D."/>
            <person name="Babbage A.K."/>
            <person name="Bagguley C.L."/>
            <person name="Bailey J."/>
            <person name="Banerjee R."/>
            <person name="Bates K."/>
            <person name="Beasley H."/>
            <person name="Bray-Allen S."/>
            <person name="Brown A.J."/>
            <person name="Brown J.Y."/>
            <person name="Burford D.C."/>
            <person name="Burrill W."/>
            <person name="Burton J."/>
            <person name="Cahill P."/>
            <person name="Camire D."/>
            <person name="Carter N.P."/>
            <person name="Chapman J.C."/>
            <person name="Clark S.Y."/>
            <person name="Clarke G."/>
            <person name="Clee C.M."/>
            <person name="Clegg S."/>
            <person name="Corby N."/>
            <person name="Coulson A."/>
            <person name="Dhami P."/>
            <person name="Dutta I."/>
            <person name="Dunn M."/>
            <person name="Faulkner L."/>
            <person name="Frankish A."/>
            <person name="Frankland J.A."/>
            <person name="Garner P."/>
            <person name="Garnett J."/>
            <person name="Gribble S."/>
            <person name="Griffiths C."/>
            <person name="Grocock R."/>
            <person name="Gustafson E."/>
            <person name="Hammond S."/>
            <person name="Harley J.L."/>
            <person name="Hart E."/>
            <person name="Heath P.D."/>
            <person name="Ho T.P."/>
            <person name="Hopkins B."/>
            <person name="Horne J."/>
            <person name="Howden P.J."/>
            <person name="Huckle E."/>
            <person name="Hynds C."/>
            <person name="Johnson C."/>
            <person name="Johnson D."/>
            <person name="Kana A."/>
            <person name="Kay M."/>
            <person name="Kimberley A.M."/>
            <person name="Kershaw J.K."/>
            <person name="Kokkinaki M."/>
            <person name="Laird G.K."/>
            <person name="Lawlor S."/>
            <person name="Lee H.M."/>
            <person name="Leongamornlert D.A."/>
            <person name="Laird G."/>
            <person name="Lloyd C."/>
            <person name="Lloyd D.M."/>
            <person name="Loveland J."/>
            <person name="Lovell J."/>
            <person name="McLaren S."/>
            <person name="McLay K.E."/>
            <person name="McMurray A."/>
            <person name="Mashreghi-Mohammadi M."/>
            <person name="Matthews L."/>
            <person name="Milne S."/>
            <person name="Nickerson T."/>
            <person name="Nguyen M."/>
            <person name="Overton-Larty E."/>
            <person name="Palmer S.A."/>
            <person name="Pearce A.V."/>
            <person name="Peck A.I."/>
            <person name="Pelan S."/>
            <person name="Phillimore B."/>
            <person name="Porter K."/>
            <person name="Rice C.M."/>
            <person name="Rogosin A."/>
            <person name="Ross M.T."/>
            <person name="Sarafidou T."/>
            <person name="Sehra H.K."/>
            <person name="Shownkeen R."/>
            <person name="Skuce C.D."/>
            <person name="Smith M."/>
            <person name="Standring L."/>
            <person name="Sycamore N."/>
            <person name="Tester J."/>
            <person name="Thorpe A."/>
            <person name="Torcasso W."/>
            <person name="Tracey A."/>
            <person name="Tromans A."/>
            <person name="Tsolas J."/>
            <person name="Wall M."/>
            <person name="Walsh J."/>
            <person name="Wang H."/>
            <person name="Weinstock K."/>
            <person name="West A.P."/>
            <person name="Willey D.L."/>
            <person name="Whitehead S.L."/>
            <person name="Wilming L."/>
            <person name="Wray P.W."/>
            <person name="Young L."/>
            <person name="Chen Y."/>
            <person name="Lovering R.C."/>
            <person name="Moschonas N.K."/>
            <person name="Siebert R."/>
            <person name="Fechtel K."/>
            <person name="Bentley D."/>
            <person name="Durbin R.M."/>
            <person name="Hubbard T."/>
            <person name="Doucette-Stamm L."/>
            <person name="Beck S."/>
            <person name="Smith D.R."/>
            <person name="Rogers J."/>
        </authorList>
    </citation>
    <scope>NUCLEOTIDE SEQUENCE [LARGE SCALE GENOMIC DNA]</scope>
</reference>
<reference key="4">
    <citation type="submission" date="2005-07" db="EMBL/GenBank/DDBJ databases">
        <authorList>
            <person name="Mural R.J."/>
            <person name="Istrail S."/>
            <person name="Sutton G."/>
            <person name="Florea L."/>
            <person name="Halpern A.L."/>
            <person name="Mobarry C.M."/>
            <person name="Lippert R."/>
            <person name="Walenz B."/>
            <person name="Shatkay H."/>
            <person name="Dew I."/>
            <person name="Miller J.R."/>
            <person name="Flanigan M.J."/>
            <person name="Edwards N.J."/>
            <person name="Bolanos R."/>
            <person name="Fasulo D."/>
            <person name="Halldorsson B.V."/>
            <person name="Hannenhalli S."/>
            <person name="Turner R."/>
            <person name="Yooseph S."/>
            <person name="Lu F."/>
            <person name="Nusskern D.R."/>
            <person name="Shue B.C."/>
            <person name="Zheng X.H."/>
            <person name="Zhong F."/>
            <person name="Delcher A.L."/>
            <person name="Huson D.H."/>
            <person name="Kravitz S.A."/>
            <person name="Mouchard L."/>
            <person name="Reinert K."/>
            <person name="Remington K.A."/>
            <person name="Clark A.G."/>
            <person name="Waterman M.S."/>
            <person name="Eichler E.E."/>
            <person name="Adams M.D."/>
            <person name="Hunkapiller M.W."/>
            <person name="Myers E.W."/>
            <person name="Venter J.C."/>
        </authorList>
    </citation>
    <scope>NUCLEOTIDE SEQUENCE [LARGE SCALE GENOMIC DNA]</scope>
</reference>
<reference key="5">
    <citation type="journal article" date="2004" name="Genome Res.">
        <title>The status, quality, and expansion of the NIH full-length cDNA project: the Mammalian Gene Collection (MGC).</title>
        <authorList>
            <consortium name="The MGC Project Team"/>
        </authorList>
    </citation>
    <scope>NUCLEOTIDE SEQUENCE [LARGE SCALE MRNA]</scope>
    <scope>VARIANT HIS-266</scope>
    <source>
        <tissue>Testis</tissue>
    </source>
</reference>
<reference key="6">
    <citation type="journal article" date="2004" name="J. Virol.">
        <title>Downregulation of major histocompatibility complex class I by human ubiquitin ligases related to viral immune evasion proteins.</title>
        <authorList>
            <person name="Bartee E."/>
            <person name="Mansouri M."/>
            <person name="Hovey Nerenberg B.T."/>
            <person name="Gouveia K."/>
            <person name="Frueh K."/>
        </authorList>
    </citation>
    <scope>FUNCTION</scope>
    <scope>TISSUE SPECIFICITY</scope>
    <scope>SUBCELLULAR LOCATION</scope>
</reference>
<reference key="7">
    <citation type="journal article" date="2008" name="Eur. J. Immunol.">
        <title>Interleukin-10-induced MARCH1 mediates intracellular sequestration of MHC class II in monocytes.</title>
        <authorList>
            <person name="Thibodeau J."/>
            <person name="Bourgeois-Daigneault M.C."/>
            <person name="Huppe G."/>
            <person name="Tremblay J."/>
            <person name="Aumont A."/>
            <person name="Houde M."/>
            <person name="Bartee E."/>
            <person name="Brunet A."/>
            <person name="Gauvreau M.E."/>
            <person name="de Gassart A."/>
            <person name="Gatti E."/>
            <person name="Baril M."/>
            <person name="Cloutier M."/>
            <person name="Bontron S."/>
            <person name="Fruh K."/>
            <person name="Lamarre D."/>
            <person name="Steimle V."/>
        </authorList>
    </citation>
    <scope>FUNCTION AS AN E3 UBIQUITIN LIGASE FOR HLA-DR BETA</scope>
</reference>
<reference key="8">
    <citation type="journal article" date="2009" name="J. Biol. Chem.">
        <title>The HLA-DRalpha chain is modified by polyubiquitination.</title>
        <authorList>
            <person name="Lapaque N."/>
            <person name="Jahnke M."/>
            <person name="Trowsdale J."/>
            <person name="Kelly A.P."/>
        </authorList>
    </citation>
    <scope>FUNCTION AS AN E3 UBIQUITIN LIGASE FOR HLA-DR ALPHA AND BETA</scope>
    <scope>SUBCELLULAR LOCATION</scope>
</reference>
<reference key="9">
    <citation type="journal article" date="2009" name="Traffic">
        <title>Sorting of MHC class II molecules into exosomes through a ubiquitin-independent pathway.</title>
        <authorList>
            <person name="Gauvreau M.E."/>
            <person name="Cote M.H."/>
            <person name="Bourgeois-Daigneault M.C."/>
            <person name="Rivard L.D."/>
            <person name="Xiu F."/>
            <person name="Brunet A."/>
            <person name="Shaw A."/>
            <person name="Steimle V."/>
            <person name="Thibodeau J."/>
        </authorList>
    </citation>
    <scope>FUNCTION AS AN E3 UBIQUITIN LIGASE FOR HLA-DR</scope>
</reference>
<reference key="10">
    <citation type="journal article" date="2013" name="J. Proteome Res.">
        <title>Toward a comprehensive characterization of a human cancer cell phosphoproteome.</title>
        <authorList>
            <person name="Zhou H."/>
            <person name="Di Palma S."/>
            <person name="Preisinger C."/>
            <person name="Peng M."/>
            <person name="Polat A.N."/>
            <person name="Heck A.J."/>
            <person name="Mohammed S."/>
        </authorList>
    </citation>
    <scope>PHOSPHORYLATION [LARGE SCALE ANALYSIS] AT SER-253</scope>
    <scope>IDENTIFICATION BY MASS SPECTROMETRY [LARGE SCALE ANALYSIS]</scope>
    <source>
        <tissue>Erythroleukemia</tissue>
    </source>
</reference>
<reference key="11">
    <citation type="journal article" date="2017" name="J. Cell Sci.">
        <title>Characterization of E3 ligases involved in lysosomal sorting of the HIV-1 restriction factor BST2.</title>
        <authorList>
            <person name="Roy N."/>
            <person name="Pacini G."/>
            <person name="Berlioz-Torrent C."/>
            <person name="Janvier K."/>
        </authorList>
    </citation>
    <scope>FUNCTION</scope>
    <scope>CATALYTIC ACTIVITY</scope>
    <scope>MUTAGENESIS OF CYS-80; CYS-83; CYS-123 AND CYS-126</scope>
</reference>
<reference key="12">
    <citation type="journal article" date="2019" name="Cell Rep.">
        <title>MARCH8 Ubiquitinates the Hepatitis C Virus Nonstructural 2 Protein and Mediates Viral Envelopment.</title>
        <authorList>
            <person name="Kumar S."/>
            <person name="Barouch-Bentov R."/>
            <person name="Xiao F."/>
            <person name="Schor S."/>
            <person name="Pu S."/>
            <person name="Biquand E."/>
            <person name="Lu A."/>
            <person name="Lindenbach B.D."/>
            <person name="Jacob Y."/>
            <person name="Demeret C."/>
            <person name="Einav S."/>
        </authorList>
    </citation>
    <scope>FUNCTION (MICROBIAL INFECTION)</scope>
    <scope>CATALYTIC ACTIVITY</scope>
    <scope>SUBCELLULAR LOCATION</scope>
</reference>
<reference key="13">
    <citation type="journal article" date="2020" name="MBio">
        <title>MARCH8 Inhibits Ebola Virus Glycoprotein, Human Immunodeficiency Virus Type 1 Envelope Glycoprotein, and Avian Influenza Virus H5N1 Hemagglutinin Maturation.</title>
        <authorList>
            <person name="Yu C."/>
            <person name="Li S."/>
            <person name="Zhang X."/>
            <person name="Khan I."/>
            <person name="Ahmad I."/>
            <person name="Zhou Y."/>
            <person name="Li S."/>
            <person name="Shi J."/>
            <person name="Wang Y."/>
            <person name="Zheng Y.H."/>
        </authorList>
    </citation>
    <scope>FUNCTION</scope>
    <scope>MUTAGENESIS OF TRP-114</scope>
    <scope>SUBCELLULAR LOCATION</scope>
</reference>
<reference key="14">
    <citation type="journal article" date="2021" name="Mol. Cancer Res.">
        <title>Membrane-Associated RING-CH 8 Functions as a Novel PD-L1 E3 Ligase to Mediate PD-L1 Degradation Induced by EGFR Inhibitors.</title>
        <authorList>
            <person name="Qian G."/>
            <person name="Guo J."/>
            <person name="Vallega K.A."/>
            <person name="Hu C."/>
            <person name="Chen Z."/>
            <person name="Deng Y."/>
            <person name="Wang Q."/>
            <person name="Fan S."/>
            <person name="Ramalingam S.S."/>
            <person name="Owonikoko T.K."/>
            <person name="Wei W."/>
            <person name="Sun S.Y."/>
        </authorList>
    </citation>
    <scope>FUNCTION</scope>
    <scope>CATALYTIC ACTIVITY</scope>
</reference>
<reference key="15">
    <citation type="journal article" date="2021" name="Nat. Commun.">
        <title>MARCH8 inhibits influenza A virus infection by targeting viral M2 protein for ubiquitination-dependent degradation in lysosomes.</title>
        <authorList>
            <person name="Liu X."/>
            <person name="Xu F."/>
            <person name="Ren L."/>
            <person name="Zhao F."/>
            <person name="Huang Y."/>
            <person name="Wei L."/>
            <person name="Wang Y."/>
            <person name="Wang C."/>
            <person name="Fan Z."/>
            <person name="Mei S."/>
            <person name="Song J."/>
            <person name="Zhao Z."/>
            <person name="Cen S."/>
            <person name="Liang C."/>
            <person name="Wang J."/>
            <person name="Guo F."/>
        </authorList>
    </citation>
    <scope>FUNCTION</scope>
    <scope>CATALYTIC ACTIVITY</scope>
</reference>
<reference key="16">
    <citation type="journal article" date="2022" name="Microbiol. Spectr.">
        <title>MARCH8 Targets Cytoplasmic Lysine Residues of Various Viral Envelope Glycoproteins.</title>
        <authorList>
            <person name="Zhang Y."/>
            <person name="Ozono S."/>
            <person name="Tada T."/>
            <person name="Tobiume M."/>
            <person name="Kameoka M."/>
            <person name="Kishigami S."/>
            <person name="Fujita H."/>
            <person name="Tokunaga K."/>
        </authorList>
    </citation>
    <scope>FUNCTION</scope>
    <scope>CATALYTIC ACTIVITY</scope>
</reference>
<reference key="17">
    <citation type="journal article" date="2022" name="Sci. Signal.">
        <title>MARCH8 attenuates cGAS-mediated innate immune responses through ubiquitylation.</title>
        <authorList>
            <person name="Yang X."/>
            <person name="Shi C."/>
            <person name="Li H."/>
            <person name="Shen S."/>
            <person name="Su C."/>
            <person name="Yin H."/>
        </authorList>
    </citation>
    <scope>FUNCTION</scope>
    <scope>SUBCELLULAR LOCATION</scope>
    <scope>CATALYTIC ACTIVITY</scope>
</reference>
<reference key="18">
    <citation type="journal article" date="2024" name="J. Immunol.">
        <title>MARCH8 Mediates K27-Linked Polyubiquitination of IL-7 Receptor alpha to Negatively Regulate IL-7-Triggered T Cell Homeostasis.</title>
        <authorList>
            <person name="Gao D."/>
            <person name="Yi X.M."/>
            <person name="Feng L."/>
            <person name="Li S."/>
            <person name="Shu H.B."/>
        </authorList>
    </citation>
    <scope>FUNCTION</scope>
    <scope>MUTAGENESIS OF TRP-114</scope>
</reference>
<reference key="19">
    <citation type="submission" date="2006-06" db="PDB data bank">
        <title>Solution structure of the RING domain of the human cellular modulator of immune recognition protein.</title>
        <authorList>
            <consortium name="RIKEN structural genomics initiative (RSGI)"/>
        </authorList>
    </citation>
    <scope>STRUCTURE BY NMR OF 65-136</scope>
</reference>
<protein>
    <recommendedName>
        <fullName>E3 ubiquitin-protein ligase MARCHF8</fullName>
        <ecNumber evidence="10 11 13 14 15 16">2.3.2.27</ecNumber>
    </recommendedName>
    <alternativeName>
        <fullName>Cellular modulator of immune recognition</fullName>
        <shortName>c-MIR</shortName>
    </alternativeName>
    <alternativeName>
        <fullName>Membrane-associated RING finger protein 8</fullName>
    </alternativeName>
    <alternativeName>
        <fullName>Membrane-associated RING-CH protein VIII</fullName>
        <shortName>MARCH-VIII</shortName>
    </alternativeName>
    <alternativeName>
        <fullName>RING finger protein 178</fullName>
    </alternativeName>
    <alternativeName>
        <fullName evidence="18">RING-type E3 ubiquitin transferase MARCHF8</fullName>
    </alternativeName>
</protein>
<sequence>MSMPLHQISAIPSQDAISARVYRSKTKEKEREEQNEKTLGHFMSHSSNISKAGSPPSASAPAPVSSFSRTSITPSSQDICRICHCEGDDESPLITPCHCTGSLHFVHQACLQQWIKSSDTRCCELCKYEFIMETKLKPLRKWEKLQMTSSERRKIMCSVTFHVIAITCVVWSLYVLIDRTAEEIKQGQATGILEWPFWTKLVVVAIGFTGGLLFMYVQCKVYVQLWKRLKAYNRVIYVQNCPETSKKNIFEKSPLTEPNFENKHGYGICHSDTNSSCCTEPEDTGAEIIHV</sequence>
<feature type="chain" id="PRO_0000274370" description="E3 ubiquitin-protein ligase MARCHF8">
    <location>
        <begin position="1"/>
        <end position="291"/>
    </location>
</feature>
<feature type="transmembrane region" description="Helical" evidence="1">
    <location>
        <begin position="157"/>
        <end position="177"/>
    </location>
</feature>
<feature type="transmembrane region" description="Helical" evidence="1">
    <location>
        <begin position="197"/>
        <end position="217"/>
    </location>
</feature>
<feature type="zinc finger region" description="RING-CH-type" evidence="2">
    <location>
        <begin position="72"/>
        <end position="133"/>
    </location>
</feature>
<feature type="region of interest" description="Disordered" evidence="3">
    <location>
        <begin position="22"/>
        <end position="72"/>
    </location>
</feature>
<feature type="compositionally biased region" description="Basic and acidic residues" evidence="3">
    <location>
        <begin position="25"/>
        <end position="39"/>
    </location>
</feature>
<feature type="compositionally biased region" description="Low complexity" evidence="3">
    <location>
        <begin position="50"/>
        <end position="72"/>
    </location>
</feature>
<feature type="binding site" evidence="2">
    <location>
        <position position="80"/>
    </location>
    <ligand>
        <name>Zn(2+)</name>
        <dbReference type="ChEBI" id="CHEBI:29105"/>
        <label>1</label>
    </ligand>
</feature>
<feature type="binding site" evidence="2">
    <location>
        <position position="83"/>
    </location>
    <ligand>
        <name>Zn(2+)</name>
        <dbReference type="ChEBI" id="CHEBI:29105"/>
        <label>1</label>
    </ligand>
</feature>
<feature type="binding site" evidence="2">
    <location>
        <position position="97"/>
    </location>
    <ligand>
        <name>Zn(2+)</name>
        <dbReference type="ChEBI" id="CHEBI:29105"/>
        <label>2</label>
    </ligand>
</feature>
<feature type="binding site" evidence="2">
    <location>
        <position position="99"/>
    </location>
    <ligand>
        <name>Zn(2+)</name>
        <dbReference type="ChEBI" id="CHEBI:29105"/>
        <label>2</label>
    </ligand>
</feature>
<feature type="binding site" evidence="2">
    <location>
        <position position="107"/>
    </location>
    <ligand>
        <name>Zn(2+)</name>
        <dbReference type="ChEBI" id="CHEBI:29105"/>
        <label>1</label>
    </ligand>
</feature>
<feature type="binding site" evidence="2">
    <location>
        <position position="110"/>
    </location>
    <ligand>
        <name>Zn(2+)</name>
        <dbReference type="ChEBI" id="CHEBI:29105"/>
        <label>1</label>
    </ligand>
</feature>
<feature type="binding site" evidence="2">
    <location>
        <position position="123"/>
    </location>
    <ligand>
        <name>Zn(2+)</name>
        <dbReference type="ChEBI" id="CHEBI:29105"/>
        <label>2</label>
    </ligand>
</feature>
<feature type="binding site" evidence="2">
    <location>
        <position position="126"/>
    </location>
    <ligand>
        <name>Zn(2+)</name>
        <dbReference type="ChEBI" id="CHEBI:29105"/>
        <label>2</label>
    </ligand>
</feature>
<feature type="modified residue" description="Phosphoserine" evidence="20">
    <location>
        <position position="253"/>
    </location>
</feature>
<feature type="splice variant" id="VSP_055697" description="In isoform 2." evidence="18">
    <original>I</original>
    <variation>ICSSSAVFSECCHHSSVQSAVVSKAPHCQSSLTQGLTVTVICKDTLQASKRNSFGSEWAQALKPAKNTKARRTLKFSRSLNDVGEKAQDTSESFAYVERTCSEGKLILPQDTCLRTNRFHHKEKRTLNHKPLGNSKHSCVSCLSAGRSTASEVEAGKGGRPGLLLEEKADGEATSRSRQLLQYLFSLSHGLSASSLHRFHELESCAARLHTAKSSSGLAGSMGFCSDEMGDDDVFEDSTSAKLKSRVLRAPLCSTEKDSDLDCPSPFSEKLPPISPVSTSGDV</variation>
    <location>
        <position position="79"/>
    </location>
</feature>
<feature type="sequence variant" id="VAR_030266" description="In dbSNP:rs3764990.">
    <original>P</original>
    <variation>S</variation>
    <location>
        <position position="92"/>
    </location>
</feature>
<feature type="sequence variant" id="VAR_030267" description="In dbSNP:rs7908745." evidence="6">
    <original>Y</original>
    <variation>H</variation>
    <location>
        <position position="266"/>
    </location>
</feature>
<feature type="mutagenesis site" description="Strong loss of catalytic activity; when associated with S-83, S-123 and S-126." evidence="10">
    <original>C</original>
    <variation>S</variation>
    <location>
        <position position="80"/>
    </location>
</feature>
<feature type="mutagenesis site" description="Strong loss of catalytic activity; when associated with S-80, S-123 and S-126." evidence="10">
    <original>C</original>
    <variation>S</variation>
    <location>
        <position position="83"/>
    </location>
</feature>
<feature type="mutagenesis site" description="Almost complete loss of ebolavirus restriction and IL7R degradation." evidence="12 17">
    <original>W</original>
    <variation>A</variation>
    <location>
        <position position="114"/>
    </location>
</feature>
<feature type="mutagenesis site" description="Strong loss of catalytic activity; when associated with S-80, S-83 and S-126." evidence="10">
    <original>C</original>
    <variation>S</variation>
    <location>
        <position position="123"/>
    </location>
</feature>
<feature type="mutagenesis site" description="Strong loss of catalytic activity; when associated with S-80, S-83 and S-123." evidence="10">
    <original>C</original>
    <variation>S</variation>
    <location>
        <position position="126"/>
    </location>
</feature>
<feature type="strand" evidence="21">
    <location>
        <begin position="81"/>
        <end position="83"/>
    </location>
</feature>
<feature type="strand" evidence="21">
    <location>
        <begin position="89"/>
        <end position="91"/>
    </location>
</feature>
<feature type="strand" evidence="21">
    <location>
        <begin position="96"/>
        <end position="98"/>
    </location>
</feature>
<feature type="strand" evidence="21">
    <location>
        <begin position="101"/>
        <end position="103"/>
    </location>
</feature>
<feature type="helix" evidence="21">
    <location>
        <begin position="110"/>
        <end position="118"/>
    </location>
</feature>
<feature type="strand" evidence="21">
    <location>
        <begin position="124"/>
        <end position="126"/>
    </location>
</feature>
<gene>
    <name evidence="19" type="primary">MARCHF8</name>
    <name type="synonym">MARCH8</name>
    <name type="synonym">MIR</name>
    <name type="synonym">RNF178</name>
</gene>